<name>IBB3_WHEAT</name>
<sequence length="71" mass="7962">EEAMPSAWPCCDECGTCTRMIPPRCTCMDVSPSGCHPACKNCVQTTLGGRDVFWCMLRIENFCKRRCTPAR</sequence>
<proteinExistence type="evidence at protein level"/>
<protein>
    <recommendedName>
        <fullName>Bowman-Birk type trypsin inhibitor</fullName>
        <shortName>WTI</shortName>
    </recommendedName>
</protein>
<accession>P81713</accession>
<evidence type="ECO:0000250" key="1">
    <source>
        <dbReference type="UniProtKB" id="P80321"/>
    </source>
</evidence>
<evidence type="ECO:0000305" key="2"/>
<feature type="chain" id="PRO_0000105860" description="Bowman-Birk type trypsin inhibitor">
    <location>
        <begin position="1"/>
        <end position="71"/>
    </location>
</feature>
<feature type="site" description="Reactive bond for trypsin">
    <location>
        <begin position="19"/>
        <end position="20"/>
    </location>
</feature>
<feature type="disulfide bond" evidence="1">
    <location>
        <begin position="10"/>
        <end position="67"/>
    </location>
</feature>
<feature type="disulfide bond" evidence="1">
    <location>
        <begin position="11"/>
        <end position="27"/>
    </location>
</feature>
<feature type="disulfide bond" evidence="1">
    <location>
        <begin position="14"/>
        <end position="63"/>
    </location>
</feature>
<feature type="disulfide bond" evidence="1">
    <location>
        <begin position="17"/>
        <end position="25"/>
    </location>
</feature>
<feature type="disulfide bond" evidence="1">
    <location>
        <begin position="35"/>
        <end position="42"/>
    </location>
</feature>
<feature type="disulfide bond" evidence="1">
    <location>
        <begin position="39"/>
        <end position="55"/>
    </location>
</feature>
<organism>
    <name type="scientific">Triticum aestivum</name>
    <name type="common">Wheat</name>
    <dbReference type="NCBI Taxonomy" id="4565"/>
    <lineage>
        <taxon>Eukaryota</taxon>
        <taxon>Viridiplantae</taxon>
        <taxon>Streptophyta</taxon>
        <taxon>Embryophyta</taxon>
        <taxon>Tracheophyta</taxon>
        <taxon>Spermatophyta</taxon>
        <taxon>Magnoliopsida</taxon>
        <taxon>Liliopsida</taxon>
        <taxon>Poales</taxon>
        <taxon>Poaceae</taxon>
        <taxon>BOP clade</taxon>
        <taxon>Pooideae</taxon>
        <taxon>Triticodae</taxon>
        <taxon>Triticeae</taxon>
        <taxon>Triticinae</taxon>
        <taxon>Triticum</taxon>
    </lineage>
</organism>
<keyword id="KW-0903">Direct protein sequencing</keyword>
<keyword id="KW-1015">Disulfide bond</keyword>
<keyword id="KW-0646">Protease inhibitor</keyword>
<keyword id="KW-1185">Reference proteome</keyword>
<keyword id="KW-0722">Serine protease inhibitor</keyword>
<comment type="function">
    <text>Inhibits trypsin but not chymotrypsin.</text>
</comment>
<comment type="similarity">
    <text evidence="2">Belongs to the Bowman-Birk serine protease inhibitor family.</text>
</comment>
<reference key="1">
    <citation type="journal article" date="1994" name="J. Protein Chem.">
        <title>The amino acid sequence and reactive site of a single-headed trypsin inhibitor from wheat endosperm.</title>
        <authorList>
            <person name="Poerio E."/>
            <person name="Caporale C."/>
            <person name="Carrano L."/>
            <person name="Caruso C."/>
            <person name="Vacca F."/>
            <person name="Buonocore V."/>
        </authorList>
    </citation>
    <scope>PROTEIN SEQUENCE</scope>
    <source>
        <strain>cv. San Pastore</strain>
        <tissue>Endosperm</tissue>
    </source>
</reference>
<dbReference type="SMR" id="P81713"/>
<dbReference type="STRING" id="4565.P81713"/>
<dbReference type="Proteomes" id="UP000019116">
    <property type="component" value="Unplaced"/>
</dbReference>
<dbReference type="ExpressionAtlas" id="P81713">
    <property type="expression patterns" value="baseline and differential"/>
</dbReference>
<dbReference type="GO" id="GO:0005576">
    <property type="term" value="C:extracellular region"/>
    <property type="evidence" value="ECO:0007669"/>
    <property type="project" value="InterPro"/>
</dbReference>
<dbReference type="GO" id="GO:0004867">
    <property type="term" value="F:serine-type endopeptidase inhibitor activity"/>
    <property type="evidence" value="ECO:0007669"/>
    <property type="project" value="UniProtKB-KW"/>
</dbReference>
<dbReference type="CDD" id="cd00023">
    <property type="entry name" value="BBI"/>
    <property type="match status" value="1"/>
</dbReference>
<dbReference type="Gene3D" id="2.10.69.10">
    <property type="entry name" value="Cysteine Protease (Bromelain) Inhibitor, subunit H"/>
    <property type="match status" value="1"/>
</dbReference>
<dbReference type="InterPro" id="IPR035995">
    <property type="entry name" value="Bowman-Birk_prot_inh"/>
</dbReference>
<dbReference type="InterPro" id="IPR000877">
    <property type="entry name" value="Prot_inh_BBI"/>
</dbReference>
<dbReference type="Pfam" id="PF00228">
    <property type="entry name" value="Bowman-Birk_leg"/>
    <property type="match status" value="1"/>
</dbReference>
<dbReference type="SMART" id="SM00269">
    <property type="entry name" value="BowB"/>
    <property type="match status" value="1"/>
</dbReference>
<dbReference type="SUPFAM" id="SSF57247">
    <property type="entry name" value="Bowman-Birk inhibitor, BBI"/>
    <property type="match status" value="1"/>
</dbReference>